<keyword id="KW-0067">ATP-binding</keyword>
<keyword id="KW-0460">Magnesium</keyword>
<keyword id="KW-0547">Nucleotide-binding</keyword>
<keyword id="KW-0808">Transferase</keyword>
<keyword id="KW-0819">tRNA processing</keyword>
<feature type="chain" id="PRO_0000377087" description="tRNA dimethylallyltransferase">
    <location>
        <begin position="1"/>
        <end position="328"/>
    </location>
</feature>
<feature type="binding site" evidence="1">
    <location>
        <begin position="10"/>
        <end position="17"/>
    </location>
    <ligand>
        <name>ATP</name>
        <dbReference type="ChEBI" id="CHEBI:30616"/>
    </ligand>
</feature>
<feature type="binding site" evidence="1">
    <location>
        <begin position="12"/>
        <end position="17"/>
    </location>
    <ligand>
        <name>substrate</name>
    </ligand>
</feature>
<feature type="site" description="Interaction with substrate tRNA" evidence="1">
    <location>
        <position position="106"/>
    </location>
</feature>
<feature type="site" description="Interaction with substrate tRNA" evidence="1">
    <location>
        <position position="127"/>
    </location>
</feature>
<dbReference type="EC" id="2.5.1.75" evidence="1"/>
<dbReference type="EMBL" id="CP001095">
    <property type="protein sequence ID" value="ACJ52041.1"/>
    <property type="molecule type" value="Genomic_DNA"/>
</dbReference>
<dbReference type="EMBL" id="AP010889">
    <property type="protein sequence ID" value="BAJ68549.1"/>
    <property type="molecule type" value="Genomic_DNA"/>
</dbReference>
<dbReference type="RefSeq" id="WP_012577307.1">
    <property type="nucleotide sequence ID" value="NZ_JDTT01000006.1"/>
</dbReference>
<dbReference type="SMR" id="B7GQG1"/>
<dbReference type="KEGG" id="bln:Blon_0942"/>
<dbReference type="KEGG" id="blon:BLIJ_0959"/>
<dbReference type="PATRIC" id="fig|391904.8.peg.969"/>
<dbReference type="HOGENOM" id="CLU_032616_0_1_11"/>
<dbReference type="Proteomes" id="UP000001360">
    <property type="component" value="Chromosome"/>
</dbReference>
<dbReference type="GO" id="GO:0005524">
    <property type="term" value="F:ATP binding"/>
    <property type="evidence" value="ECO:0007669"/>
    <property type="project" value="UniProtKB-UniRule"/>
</dbReference>
<dbReference type="GO" id="GO:0052381">
    <property type="term" value="F:tRNA dimethylallyltransferase activity"/>
    <property type="evidence" value="ECO:0007669"/>
    <property type="project" value="UniProtKB-UniRule"/>
</dbReference>
<dbReference type="GO" id="GO:0006400">
    <property type="term" value="P:tRNA modification"/>
    <property type="evidence" value="ECO:0007669"/>
    <property type="project" value="TreeGrafter"/>
</dbReference>
<dbReference type="FunFam" id="1.10.20.140:FF:000001">
    <property type="entry name" value="tRNA dimethylallyltransferase"/>
    <property type="match status" value="1"/>
</dbReference>
<dbReference type="Gene3D" id="1.10.20.140">
    <property type="match status" value="1"/>
</dbReference>
<dbReference type="Gene3D" id="3.40.50.300">
    <property type="entry name" value="P-loop containing nucleotide triphosphate hydrolases"/>
    <property type="match status" value="1"/>
</dbReference>
<dbReference type="HAMAP" id="MF_00185">
    <property type="entry name" value="IPP_trans"/>
    <property type="match status" value="1"/>
</dbReference>
<dbReference type="InterPro" id="IPR039657">
    <property type="entry name" value="Dimethylallyltransferase"/>
</dbReference>
<dbReference type="InterPro" id="IPR018022">
    <property type="entry name" value="IPT"/>
</dbReference>
<dbReference type="InterPro" id="IPR027417">
    <property type="entry name" value="P-loop_NTPase"/>
</dbReference>
<dbReference type="NCBIfam" id="TIGR00174">
    <property type="entry name" value="miaA"/>
    <property type="match status" value="1"/>
</dbReference>
<dbReference type="PANTHER" id="PTHR11088">
    <property type="entry name" value="TRNA DIMETHYLALLYLTRANSFERASE"/>
    <property type="match status" value="1"/>
</dbReference>
<dbReference type="PANTHER" id="PTHR11088:SF60">
    <property type="entry name" value="TRNA DIMETHYLALLYLTRANSFERASE"/>
    <property type="match status" value="1"/>
</dbReference>
<dbReference type="Pfam" id="PF01715">
    <property type="entry name" value="IPPT"/>
    <property type="match status" value="1"/>
</dbReference>
<dbReference type="SUPFAM" id="SSF52540">
    <property type="entry name" value="P-loop containing nucleoside triphosphate hydrolases"/>
    <property type="match status" value="1"/>
</dbReference>
<comment type="function">
    <text evidence="1">Catalyzes the transfer of a dimethylallyl group onto the adenine at position 37 in tRNAs that read codons beginning with uridine, leading to the formation of N6-(dimethylallyl)adenosine (i(6)A).</text>
</comment>
<comment type="catalytic activity">
    <reaction evidence="1">
        <text>adenosine(37) in tRNA + dimethylallyl diphosphate = N(6)-dimethylallyladenosine(37) in tRNA + diphosphate</text>
        <dbReference type="Rhea" id="RHEA:26482"/>
        <dbReference type="Rhea" id="RHEA-COMP:10162"/>
        <dbReference type="Rhea" id="RHEA-COMP:10375"/>
        <dbReference type="ChEBI" id="CHEBI:33019"/>
        <dbReference type="ChEBI" id="CHEBI:57623"/>
        <dbReference type="ChEBI" id="CHEBI:74411"/>
        <dbReference type="ChEBI" id="CHEBI:74415"/>
        <dbReference type="EC" id="2.5.1.75"/>
    </reaction>
</comment>
<comment type="cofactor">
    <cofactor evidence="1">
        <name>Mg(2+)</name>
        <dbReference type="ChEBI" id="CHEBI:18420"/>
    </cofactor>
</comment>
<comment type="subunit">
    <text evidence="1">Monomer.</text>
</comment>
<comment type="similarity">
    <text evidence="1">Belongs to the IPP transferase family.</text>
</comment>
<reference key="1">
    <citation type="journal article" date="2008" name="Proc. Natl. Acad. Sci. U.S.A.">
        <title>The genome sequence of Bifidobacterium longum subsp. infantis reveals adaptations for milk utilization within the infant microbiome.</title>
        <authorList>
            <person name="Sela D.A."/>
            <person name="Chapman J."/>
            <person name="Adeuya A."/>
            <person name="Kim J.H."/>
            <person name="Chen F."/>
            <person name="Whitehead T.R."/>
            <person name="Lapidus A."/>
            <person name="Rokhsar D.S."/>
            <person name="Lebrilla C.B."/>
            <person name="German J.B."/>
            <person name="Price N.P."/>
            <person name="Richardson P.M."/>
            <person name="Mills D.A."/>
        </authorList>
    </citation>
    <scope>NUCLEOTIDE SEQUENCE [LARGE SCALE GENOMIC DNA]</scope>
    <source>
        <strain>ATCC 15697 / DSM 20088 / JCM 1222 / NCTC 11817 / S12</strain>
    </source>
</reference>
<reference key="2">
    <citation type="journal article" date="2011" name="Nature">
        <title>Bifidobacteria can protect from enteropathogenic infection through production of acetate.</title>
        <authorList>
            <person name="Fukuda S."/>
            <person name="Toh H."/>
            <person name="Hase K."/>
            <person name="Oshima K."/>
            <person name="Nakanishi Y."/>
            <person name="Yoshimura K."/>
            <person name="Tobe T."/>
            <person name="Clarke J.M."/>
            <person name="Topping D.L."/>
            <person name="Suzuki T."/>
            <person name="Taylor T.D."/>
            <person name="Itoh K."/>
            <person name="Kikuchi J."/>
            <person name="Morita H."/>
            <person name="Hattori M."/>
            <person name="Ohno H."/>
        </authorList>
    </citation>
    <scope>NUCLEOTIDE SEQUENCE [LARGE SCALE GENOMIC DNA]</scope>
    <source>
        <strain>ATCC 15697 / DSM 20088 / JCM 1222 / NCTC 11817 / S12</strain>
    </source>
</reference>
<name>MIAA_BIFLS</name>
<gene>
    <name evidence="1" type="primary">miaA</name>
    <name type="ordered locus">Blon_0942</name>
    <name type="ordered locus">BLIJ_0959</name>
</gene>
<sequence length="328" mass="36471">MTQRVVSIVGPTASGKTGLGIAIARRLAEAGERAEIVNADAYQMYRGMDIGTAKPTAEEQAVVSHHLIDIIDPEDTMSVARFQQLARETIADLQSRGIRPILVGGSGLYARAAIDDITFPGTDPDVRTRLEEREKTEGAGALFDELRAKDPEAAARMDPRNPRRTIRALEVIELTGKPYSASLPRYRYVIPSVQIGLDLDRPDLDHRIDLRTKQMYDDGFIEEVERLRPHLGATAVRALGYQQIIDLLDGIWDVNDAFADIAQKTKRLARKQMGWFGRDPRIHWLQALNPKLVDNAMAIIAHADAGDYDSIDARADEYTQHHLGDITA</sequence>
<accession>B7GQG1</accession>
<accession>E8MRC4</accession>
<organism>
    <name type="scientific">Bifidobacterium longum subsp. infantis (strain ATCC 15697 / DSM 20088 / JCM 1222 / NCTC 11817 / S12)</name>
    <dbReference type="NCBI Taxonomy" id="391904"/>
    <lineage>
        <taxon>Bacteria</taxon>
        <taxon>Bacillati</taxon>
        <taxon>Actinomycetota</taxon>
        <taxon>Actinomycetes</taxon>
        <taxon>Bifidobacteriales</taxon>
        <taxon>Bifidobacteriaceae</taxon>
        <taxon>Bifidobacterium</taxon>
    </lineage>
</organism>
<evidence type="ECO:0000255" key="1">
    <source>
        <dbReference type="HAMAP-Rule" id="MF_00185"/>
    </source>
</evidence>
<proteinExistence type="inferred from homology"/>
<protein>
    <recommendedName>
        <fullName evidence="1">tRNA dimethylallyltransferase</fullName>
        <ecNumber evidence="1">2.5.1.75</ecNumber>
    </recommendedName>
    <alternativeName>
        <fullName evidence="1">Dimethylallyl diphosphate:tRNA dimethylallyltransferase</fullName>
        <shortName evidence="1">DMAPP:tRNA dimethylallyltransferase</shortName>
        <shortName evidence="1">DMATase</shortName>
    </alternativeName>
    <alternativeName>
        <fullName evidence="1">Isopentenyl-diphosphate:tRNA isopentenyltransferase</fullName>
        <shortName evidence="1">IPP transferase</shortName>
        <shortName evidence="1">IPPT</shortName>
        <shortName evidence="1">IPTase</shortName>
    </alternativeName>
</protein>